<accession>O93388</accession>
<comment type="similarity">
    <text evidence="4">Belongs to the stathmin family.</text>
</comment>
<protein>
    <recommendedName>
        <fullName>Stathmin-3</fullName>
    </recommendedName>
    <alternativeName>
        <fullName>Neuroplasticin-2</fullName>
    </alternativeName>
    <alternativeName>
        <fullName>SCG10-like protein</fullName>
    </alternativeName>
</protein>
<dbReference type="EMBL" id="AF076982">
    <property type="protein sequence ID" value="AAC27325.1"/>
    <property type="molecule type" value="mRNA"/>
</dbReference>
<dbReference type="RefSeq" id="NP_001004393.1">
    <property type="nucleotide sequence ID" value="NM_001004393.2"/>
</dbReference>
<dbReference type="SMR" id="O93388"/>
<dbReference type="FunCoup" id="O93388">
    <property type="interactions" value="120"/>
</dbReference>
<dbReference type="STRING" id="9031.ENSGALP00000069605"/>
<dbReference type="PaxDb" id="9031-ENSGALP00000009879"/>
<dbReference type="GeneID" id="419263"/>
<dbReference type="KEGG" id="gga:419263"/>
<dbReference type="CTD" id="50861"/>
<dbReference type="VEuPathDB" id="HostDB:geneid_419263"/>
<dbReference type="eggNOG" id="KOG1280">
    <property type="taxonomic scope" value="Eukaryota"/>
</dbReference>
<dbReference type="HOGENOM" id="CLU_102026_0_0_1"/>
<dbReference type="InParanoid" id="O93388"/>
<dbReference type="OrthoDB" id="5986631at2759"/>
<dbReference type="PhylomeDB" id="O93388"/>
<dbReference type="TreeFam" id="TF326935"/>
<dbReference type="PRO" id="PR:O93388"/>
<dbReference type="Proteomes" id="UP000000539">
    <property type="component" value="Chromosome 20"/>
</dbReference>
<dbReference type="Bgee" id="ENSGALG00000006130">
    <property type="expression patterns" value="Expressed in brain and 13 other cell types or tissues"/>
</dbReference>
<dbReference type="GO" id="GO:0005737">
    <property type="term" value="C:cytoplasm"/>
    <property type="evidence" value="ECO:0000318"/>
    <property type="project" value="GO_Central"/>
</dbReference>
<dbReference type="GO" id="GO:0043005">
    <property type="term" value="C:neuron projection"/>
    <property type="evidence" value="ECO:0000318"/>
    <property type="project" value="GO_Central"/>
</dbReference>
<dbReference type="GO" id="GO:0015631">
    <property type="term" value="F:tubulin binding"/>
    <property type="evidence" value="ECO:0000318"/>
    <property type="project" value="GO_Central"/>
</dbReference>
<dbReference type="GO" id="GO:0007019">
    <property type="term" value="P:microtubule depolymerization"/>
    <property type="evidence" value="ECO:0000318"/>
    <property type="project" value="GO_Central"/>
</dbReference>
<dbReference type="GO" id="GO:0031175">
    <property type="term" value="P:neuron projection development"/>
    <property type="evidence" value="ECO:0000318"/>
    <property type="project" value="GO_Central"/>
</dbReference>
<dbReference type="GO" id="GO:0031110">
    <property type="term" value="P:regulation of microtubule polymerization or depolymerization"/>
    <property type="evidence" value="ECO:0000318"/>
    <property type="project" value="GO_Central"/>
</dbReference>
<dbReference type="Gene3D" id="6.10.280.30">
    <property type="match status" value="1"/>
</dbReference>
<dbReference type="InterPro" id="IPR030514">
    <property type="entry name" value="Stathmin_CS"/>
</dbReference>
<dbReference type="InterPro" id="IPR000956">
    <property type="entry name" value="Stathmin_fam"/>
</dbReference>
<dbReference type="InterPro" id="IPR036002">
    <property type="entry name" value="Stathmin_sf"/>
</dbReference>
<dbReference type="PANTHER" id="PTHR10104">
    <property type="entry name" value="STATHMIN"/>
    <property type="match status" value="1"/>
</dbReference>
<dbReference type="PANTHER" id="PTHR10104:SF17">
    <property type="entry name" value="STATHMIN-3"/>
    <property type="match status" value="1"/>
</dbReference>
<dbReference type="Pfam" id="PF00836">
    <property type="entry name" value="Stathmin"/>
    <property type="match status" value="1"/>
</dbReference>
<dbReference type="PIRSF" id="PIRSF002285">
    <property type="entry name" value="Stathmin"/>
    <property type="match status" value="1"/>
</dbReference>
<dbReference type="PRINTS" id="PR00345">
    <property type="entry name" value="STATHMIN"/>
</dbReference>
<dbReference type="SUPFAM" id="SSF101494">
    <property type="entry name" value="Stathmin"/>
    <property type="match status" value="1"/>
</dbReference>
<dbReference type="PROSITE" id="PS00563">
    <property type="entry name" value="STATHMIN_1"/>
    <property type="match status" value="1"/>
</dbReference>
<dbReference type="PROSITE" id="PS01041">
    <property type="entry name" value="STATHMIN_2"/>
    <property type="match status" value="1"/>
</dbReference>
<dbReference type="PROSITE" id="PS51663">
    <property type="entry name" value="STATHMIN_3"/>
    <property type="match status" value="1"/>
</dbReference>
<proteinExistence type="evidence at transcript level"/>
<gene>
    <name type="primary">STMN3</name>
    <name type="synonym">NPC2</name>
    <name type="synonym">SCLIP</name>
</gene>
<organism>
    <name type="scientific">Gallus gallus</name>
    <name type="common">Chicken</name>
    <dbReference type="NCBI Taxonomy" id="9031"/>
    <lineage>
        <taxon>Eukaryota</taxon>
        <taxon>Metazoa</taxon>
        <taxon>Chordata</taxon>
        <taxon>Craniata</taxon>
        <taxon>Vertebrata</taxon>
        <taxon>Euteleostomi</taxon>
        <taxon>Archelosauria</taxon>
        <taxon>Archosauria</taxon>
        <taxon>Dinosauria</taxon>
        <taxon>Saurischia</taxon>
        <taxon>Theropoda</taxon>
        <taxon>Coelurosauria</taxon>
        <taxon>Aves</taxon>
        <taxon>Neognathae</taxon>
        <taxon>Galloanserae</taxon>
        <taxon>Galliformes</taxon>
        <taxon>Phasianidae</taxon>
        <taxon>Phasianinae</taxon>
        <taxon>Gallus</taxon>
    </lineage>
</organism>
<evidence type="ECO:0000255" key="1"/>
<evidence type="ECO:0000255" key="2">
    <source>
        <dbReference type="PROSITE-ProRule" id="PRU00998"/>
    </source>
</evidence>
<evidence type="ECO:0000256" key="3">
    <source>
        <dbReference type="SAM" id="MobiDB-lite"/>
    </source>
</evidence>
<evidence type="ECO:0000305" key="4"/>
<name>STMN3_CHICK</name>
<feature type="chain" id="PRO_0000182405" description="Stathmin-3">
    <location>
        <begin position="1"/>
        <end position="180"/>
    </location>
</feature>
<feature type="domain" description="SLD" evidence="2">
    <location>
        <begin position="38"/>
        <end position="180"/>
    </location>
</feature>
<feature type="region of interest" description="Disordered" evidence="3">
    <location>
        <begin position="60"/>
        <end position="82"/>
    </location>
</feature>
<feature type="coiled-coil region" evidence="1">
    <location>
        <begin position="75"/>
        <end position="179"/>
    </location>
</feature>
<feature type="compositionally biased region" description="Low complexity" evidence="3">
    <location>
        <begin position="60"/>
        <end position="74"/>
    </location>
</feature>
<keyword id="KW-0175">Coiled coil</keyword>
<keyword id="KW-1185">Reference proteome</keyword>
<sequence>MASTVSAYKEKMKELSLLSLICSCFHTQPHPNTIYQYGDMEVKQLDKRASGQSFEVILKSPSDLSPESPILSSPPKKKDLSLEELQRRLEAAEERRKTQEAQVLKQLAEKREHEREVLHKALEENNNFSRLAEEKLNYKMELSREIREAHLAALRERLREKELHAAEVRRNKEQREEISG</sequence>
<reference key="1">
    <citation type="submission" date="1998-07" db="EMBL/GenBank/DDBJ databases">
        <title>Characterization of a new member of the SCG10/stathmin family of genes.</title>
        <authorList>
            <person name="Lutjens R."/>
            <person name="Osen-Sand A."/>
            <person name="Grenningloh G."/>
        </authorList>
    </citation>
    <scope>NUCLEOTIDE SEQUENCE [MRNA]</scope>
</reference>